<sequence>MKTVRIETFGCKVNQYESEYMAEQLEKAGYVVLPDGNAAYYIVNSCAVTKEVEKKVKRLIKSIRNRNKNAKIILTGCFAQLSPDEAKNLPVDMVLGIDEKKHIVDHINSLNGKQQVVVSEPGRPVYEKVKGSFEDRTRSYIKVEDGCDNTCTYCAIRLARGTRIRSKPLEIFKEEFAEMVMKGYKEIVITGVNLGKYGKDMGSSLAELLKVIEKVPGDYRVRLSSINVEDVNDEIVKAFKRNPRLCPHLHISVQSGSDDVLKRMGRKYKISDFMRVVDKLRSIDPDFSITTDIIVGFPGETDADFQRTLELVEKVEFSRVHIFRFSPRPGTPASRMEGGVPESKKKERLDVLKEKAKDVSIRYRKRIIGKERKVLAEWYVMKGVLSGYDEYYVKHEFVGNRVGEFHSVRVKSLSEEGVISCRADMVEGKVPARG</sequence>
<accession>Q9WZT7</accession>
<protein>
    <recommendedName>
        <fullName>Threonylcarbamoyladenosine tRNA methylthiotransferase MtaB</fullName>
        <ecNumber>2.8.4.5</ecNumber>
    </recommendedName>
    <alternativeName>
        <fullName>tRNA-t(6)A37 methylthiotransferase</fullName>
    </alternativeName>
</protein>
<gene>
    <name type="primary">mtaB</name>
    <name type="ordered locus">TM_0830</name>
</gene>
<feature type="chain" id="PRO_0000141754" description="Threonylcarbamoyladenosine tRNA methylthiotransferase MtaB">
    <location>
        <begin position="1"/>
        <end position="434"/>
    </location>
</feature>
<feature type="domain" description="MTTase N-terminal" evidence="2">
    <location>
        <begin position="2"/>
        <end position="112"/>
    </location>
</feature>
<feature type="domain" description="Radical SAM core" evidence="3">
    <location>
        <begin position="133"/>
        <end position="362"/>
    </location>
</feature>
<feature type="binding site" evidence="2">
    <location>
        <position position="11"/>
    </location>
    <ligand>
        <name>[4Fe-4S] cluster</name>
        <dbReference type="ChEBI" id="CHEBI:49883"/>
        <label>1</label>
    </ligand>
</feature>
<feature type="binding site" evidence="2">
    <location>
        <position position="46"/>
    </location>
    <ligand>
        <name>[4Fe-4S] cluster</name>
        <dbReference type="ChEBI" id="CHEBI:49883"/>
        <label>1</label>
    </ligand>
</feature>
<feature type="binding site" evidence="2">
    <location>
        <position position="77"/>
    </location>
    <ligand>
        <name>[4Fe-4S] cluster</name>
        <dbReference type="ChEBI" id="CHEBI:49883"/>
        <label>1</label>
    </ligand>
</feature>
<feature type="binding site" evidence="2">
    <location>
        <position position="147"/>
    </location>
    <ligand>
        <name>[4Fe-4S] cluster</name>
        <dbReference type="ChEBI" id="CHEBI:49883"/>
        <label>2</label>
        <note>4Fe-4S-S-AdoMet</note>
    </ligand>
</feature>
<feature type="binding site" evidence="2">
    <location>
        <position position="151"/>
    </location>
    <ligand>
        <name>[4Fe-4S] cluster</name>
        <dbReference type="ChEBI" id="CHEBI:49883"/>
        <label>2</label>
        <note>4Fe-4S-S-AdoMet</note>
    </ligand>
</feature>
<feature type="binding site" evidence="2">
    <location>
        <position position="154"/>
    </location>
    <ligand>
        <name>[4Fe-4S] cluster</name>
        <dbReference type="ChEBI" id="CHEBI:49883"/>
        <label>2</label>
        <note>4Fe-4S-S-AdoMet</note>
    </ligand>
</feature>
<comment type="function">
    <text evidence="1">Catalyzes the methylthiolation of N6-threonylcarbamoyladenosine (t(6)A), leading to the formation of 2-methylthio-N6-threonylcarbamoyladenosine (ms(2)t(6)A) at position 37 in tRNAs that read codons beginning with adenine.</text>
</comment>
<comment type="catalytic activity">
    <reaction evidence="1">
        <text>N(6)-L-threonylcarbamoyladenosine(37) in tRNA + (sulfur carrier)-SH + AH2 + 2 S-adenosyl-L-methionine = 2-methylsulfanyl-N(6)-L-threonylcarbamoyladenosine(37) in tRNA + (sulfur carrier)-H + 5'-deoxyadenosine + L-methionine + A + S-adenosyl-L-homocysteine + 2 H(+)</text>
        <dbReference type="Rhea" id="RHEA:37075"/>
        <dbReference type="Rhea" id="RHEA-COMP:10163"/>
        <dbReference type="Rhea" id="RHEA-COMP:11092"/>
        <dbReference type="Rhea" id="RHEA-COMP:14737"/>
        <dbReference type="Rhea" id="RHEA-COMP:14739"/>
        <dbReference type="ChEBI" id="CHEBI:13193"/>
        <dbReference type="ChEBI" id="CHEBI:15378"/>
        <dbReference type="ChEBI" id="CHEBI:17319"/>
        <dbReference type="ChEBI" id="CHEBI:17499"/>
        <dbReference type="ChEBI" id="CHEBI:29917"/>
        <dbReference type="ChEBI" id="CHEBI:57844"/>
        <dbReference type="ChEBI" id="CHEBI:57856"/>
        <dbReference type="ChEBI" id="CHEBI:59789"/>
        <dbReference type="ChEBI" id="CHEBI:64428"/>
        <dbReference type="ChEBI" id="CHEBI:74418"/>
        <dbReference type="ChEBI" id="CHEBI:74420"/>
        <dbReference type="EC" id="2.8.4.5"/>
    </reaction>
</comment>
<comment type="cofactor">
    <cofactor evidence="2">
        <name>[4Fe-4S] cluster</name>
        <dbReference type="ChEBI" id="CHEBI:49883"/>
    </cofactor>
    <text evidence="2">Binds 2 [4Fe-4S] clusters. One cluster is coordinated with 3 cysteines and an exchangeable S-adenosyl-L-methionine.</text>
</comment>
<comment type="subcellular location">
    <subcellularLocation>
        <location evidence="2">Cytoplasm</location>
    </subcellularLocation>
</comment>
<comment type="similarity">
    <text evidence="4">Belongs to the methylthiotransferase family. MtaB subfamily.</text>
</comment>
<proteinExistence type="inferred from homology"/>
<organism>
    <name type="scientific">Thermotoga maritima (strain ATCC 43589 / DSM 3109 / JCM 10099 / NBRC 100826 / MSB8)</name>
    <dbReference type="NCBI Taxonomy" id="243274"/>
    <lineage>
        <taxon>Bacteria</taxon>
        <taxon>Thermotogati</taxon>
        <taxon>Thermotogota</taxon>
        <taxon>Thermotogae</taxon>
        <taxon>Thermotogales</taxon>
        <taxon>Thermotogaceae</taxon>
        <taxon>Thermotoga</taxon>
    </lineage>
</organism>
<keyword id="KW-0004">4Fe-4S</keyword>
<keyword id="KW-0963">Cytoplasm</keyword>
<keyword id="KW-0408">Iron</keyword>
<keyword id="KW-0411">Iron-sulfur</keyword>
<keyword id="KW-0479">Metal-binding</keyword>
<keyword id="KW-1185">Reference proteome</keyword>
<keyword id="KW-0949">S-adenosyl-L-methionine</keyword>
<keyword id="KW-0808">Transferase</keyword>
<keyword id="KW-0819">tRNA processing</keyword>
<dbReference type="EC" id="2.8.4.5"/>
<dbReference type="EMBL" id="AE000512">
    <property type="protein sequence ID" value="AAD35912.1"/>
    <property type="molecule type" value="Genomic_DNA"/>
</dbReference>
<dbReference type="PIR" id="B72328">
    <property type="entry name" value="B72328"/>
</dbReference>
<dbReference type="RefSeq" id="NP_228639.1">
    <property type="nucleotide sequence ID" value="NC_000853.1"/>
</dbReference>
<dbReference type="RefSeq" id="WP_004080813.1">
    <property type="nucleotide sequence ID" value="NC_000853.1"/>
</dbReference>
<dbReference type="SMR" id="Q9WZT7"/>
<dbReference type="FunCoup" id="Q9WZT7">
    <property type="interactions" value="157"/>
</dbReference>
<dbReference type="STRING" id="243274.TM_0830"/>
<dbReference type="PaxDb" id="243274-THEMA_00490"/>
<dbReference type="EnsemblBacteria" id="AAD35912">
    <property type="protein sequence ID" value="AAD35912"/>
    <property type="gene ID" value="TM_0830"/>
</dbReference>
<dbReference type="KEGG" id="tma:TM0830"/>
<dbReference type="KEGG" id="tmi:THEMA_00490"/>
<dbReference type="KEGG" id="tmm:Tmari_0832"/>
<dbReference type="KEGG" id="tmw:THMA_0851"/>
<dbReference type="eggNOG" id="COG0621">
    <property type="taxonomic scope" value="Bacteria"/>
</dbReference>
<dbReference type="InParanoid" id="Q9WZT7"/>
<dbReference type="OrthoDB" id="9805215at2"/>
<dbReference type="Proteomes" id="UP000008183">
    <property type="component" value="Chromosome"/>
</dbReference>
<dbReference type="GO" id="GO:0005737">
    <property type="term" value="C:cytoplasm"/>
    <property type="evidence" value="ECO:0007669"/>
    <property type="project" value="UniProtKB-SubCell"/>
</dbReference>
<dbReference type="GO" id="GO:0051539">
    <property type="term" value="F:4 iron, 4 sulfur cluster binding"/>
    <property type="evidence" value="ECO:0007669"/>
    <property type="project" value="UniProtKB-KW"/>
</dbReference>
<dbReference type="GO" id="GO:0046872">
    <property type="term" value="F:metal ion binding"/>
    <property type="evidence" value="ECO:0007669"/>
    <property type="project" value="UniProtKB-KW"/>
</dbReference>
<dbReference type="GO" id="GO:0035598">
    <property type="term" value="F:N6-threonylcarbomyladenosine methylthiotransferase activity"/>
    <property type="evidence" value="ECO:0000318"/>
    <property type="project" value="GO_Central"/>
</dbReference>
<dbReference type="GO" id="GO:0061712">
    <property type="term" value="F:tRNA (N(6)-L-threonylcarbamoyladenosine(37)-C(2))-methylthiotransferase"/>
    <property type="evidence" value="ECO:0007669"/>
    <property type="project" value="UniProtKB-EC"/>
</dbReference>
<dbReference type="GO" id="GO:0035600">
    <property type="term" value="P:tRNA methylthiolation"/>
    <property type="evidence" value="ECO:0000318"/>
    <property type="project" value="GO_Central"/>
</dbReference>
<dbReference type="CDD" id="cd01335">
    <property type="entry name" value="Radical_SAM"/>
    <property type="match status" value="1"/>
</dbReference>
<dbReference type="FunFam" id="3.40.50.12160:FF:000004">
    <property type="entry name" value="Threonylcarbamoyladenosine tRNA methylthiotransferase MtaB"/>
    <property type="match status" value="1"/>
</dbReference>
<dbReference type="FunFam" id="3.80.30.20:FF:000001">
    <property type="entry name" value="tRNA-2-methylthio-N(6)-dimethylallyladenosine synthase 2"/>
    <property type="match status" value="1"/>
</dbReference>
<dbReference type="Gene3D" id="3.40.50.12160">
    <property type="entry name" value="Methylthiotransferase, N-terminal domain"/>
    <property type="match status" value="1"/>
</dbReference>
<dbReference type="Gene3D" id="3.80.30.20">
    <property type="entry name" value="tm_1862 like domain"/>
    <property type="match status" value="1"/>
</dbReference>
<dbReference type="InterPro" id="IPR006638">
    <property type="entry name" value="Elp3/MiaA/NifB-like_rSAM"/>
</dbReference>
<dbReference type="InterPro" id="IPR005839">
    <property type="entry name" value="Methylthiotransferase"/>
</dbReference>
<dbReference type="InterPro" id="IPR020612">
    <property type="entry name" value="Methylthiotransferase_CS"/>
</dbReference>
<dbReference type="InterPro" id="IPR013848">
    <property type="entry name" value="Methylthiotransferase_N"/>
</dbReference>
<dbReference type="InterPro" id="IPR038135">
    <property type="entry name" value="Methylthiotransferase_N_sf"/>
</dbReference>
<dbReference type="InterPro" id="IPR006467">
    <property type="entry name" value="MiaB-like_bact"/>
</dbReference>
<dbReference type="InterPro" id="IPR007197">
    <property type="entry name" value="rSAM"/>
</dbReference>
<dbReference type="InterPro" id="IPR023404">
    <property type="entry name" value="rSAM_horseshoe"/>
</dbReference>
<dbReference type="NCBIfam" id="TIGR01579">
    <property type="entry name" value="MiaB-like-C"/>
    <property type="match status" value="1"/>
</dbReference>
<dbReference type="NCBIfam" id="TIGR00089">
    <property type="entry name" value="MiaB/RimO family radical SAM methylthiotransferase"/>
    <property type="match status" value="1"/>
</dbReference>
<dbReference type="PANTHER" id="PTHR11918">
    <property type="entry name" value="RADICAL SAM PROTEINS"/>
    <property type="match status" value="1"/>
</dbReference>
<dbReference type="PANTHER" id="PTHR11918:SF45">
    <property type="entry name" value="THREONYLCARBAMOYLADENOSINE TRNA METHYLTHIOTRANSFERASE"/>
    <property type="match status" value="1"/>
</dbReference>
<dbReference type="Pfam" id="PF04055">
    <property type="entry name" value="Radical_SAM"/>
    <property type="match status" value="1"/>
</dbReference>
<dbReference type="Pfam" id="PF00919">
    <property type="entry name" value="UPF0004"/>
    <property type="match status" value="1"/>
</dbReference>
<dbReference type="SFLD" id="SFLDG01082">
    <property type="entry name" value="B12-binding_domain_containing"/>
    <property type="match status" value="1"/>
</dbReference>
<dbReference type="SFLD" id="SFLDG01061">
    <property type="entry name" value="methylthiotransferase"/>
    <property type="match status" value="1"/>
</dbReference>
<dbReference type="SFLD" id="SFLDS00029">
    <property type="entry name" value="Radical_SAM"/>
    <property type="match status" value="1"/>
</dbReference>
<dbReference type="SMART" id="SM00729">
    <property type="entry name" value="Elp3"/>
    <property type="match status" value="1"/>
</dbReference>
<dbReference type="SUPFAM" id="SSF102114">
    <property type="entry name" value="Radical SAM enzymes"/>
    <property type="match status" value="1"/>
</dbReference>
<dbReference type="PROSITE" id="PS51449">
    <property type="entry name" value="MTTASE_N"/>
    <property type="match status" value="1"/>
</dbReference>
<dbReference type="PROSITE" id="PS01278">
    <property type="entry name" value="MTTASE_RADICAL"/>
    <property type="match status" value="1"/>
</dbReference>
<dbReference type="PROSITE" id="PS51918">
    <property type="entry name" value="RADICAL_SAM"/>
    <property type="match status" value="1"/>
</dbReference>
<evidence type="ECO:0000250" key="1">
    <source>
        <dbReference type="UniProtKB" id="P54462"/>
    </source>
</evidence>
<evidence type="ECO:0000255" key="2">
    <source>
        <dbReference type="PROSITE-ProRule" id="PRU00780"/>
    </source>
</evidence>
<evidence type="ECO:0000255" key="3">
    <source>
        <dbReference type="PROSITE-ProRule" id="PRU01266"/>
    </source>
</evidence>
<evidence type="ECO:0000305" key="4"/>
<reference key="1">
    <citation type="journal article" date="1999" name="Nature">
        <title>Evidence for lateral gene transfer between Archaea and Bacteria from genome sequence of Thermotoga maritima.</title>
        <authorList>
            <person name="Nelson K.E."/>
            <person name="Clayton R.A."/>
            <person name="Gill S.R."/>
            <person name="Gwinn M.L."/>
            <person name="Dodson R.J."/>
            <person name="Haft D.H."/>
            <person name="Hickey E.K."/>
            <person name="Peterson J.D."/>
            <person name="Nelson W.C."/>
            <person name="Ketchum K.A."/>
            <person name="McDonald L.A."/>
            <person name="Utterback T.R."/>
            <person name="Malek J.A."/>
            <person name="Linher K.D."/>
            <person name="Garrett M.M."/>
            <person name="Stewart A.M."/>
            <person name="Cotton M.D."/>
            <person name="Pratt M.S."/>
            <person name="Phillips C.A."/>
            <person name="Richardson D.L."/>
            <person name="Heidelberg J.F."/>
            <person name="Sutton G.G."/>
            <person name="Fleischmann R.D."/>
            <person name="Eisen J.A."/>
            <person name="White O."/>
            <person name="Salzberg S.L."/>
            <person name="Smith H.O."/>
            <person name="Venter J.C."/>
            <person name="Fraser C.M."/>
        </authorList>
    </citation>
    <scope>NUCLEOTIDE SEQUENCE [LARGE SCALE GENOMIC DNA]</scope>
    <source>
        <strain>ATCC 43589 / DSM 3109 / JCM 10099 / NBRC 100826 / MSB8</strain>
    </source>
</reference>
<name>MTAB_THEMA</name>